<organism>
    <name type="scientific">Mugil cephalus</name>
    <name type="common">Flathead mullet</name>
    <name type="synonym">Mugil japonicus</name>
    <dbReference type="NCBI Taxonomy" id="48193"/>
    <lineage>
        <taxon>Eukaryota</taxon>
        <taxon>Metazoa</taxon>
        <taxon>Chordata</taxon>
        <taxon>Craniata</taxon>
        <taxon>Vertebrata</taxon>
        <taxon>Euteleostomi</taxon>
        <taxon>Actinopterygii</taxon>
        <taxon>Neopterygii</taxon>
        <taxon>Teleostei</taxon>
        <taxon>Neoteleostei</taxon>
        <taxon>Acanthomorphata</taxon>
        <taxon>Ovalentaria</taxon>
        <taxon>Mugilomorphae</taxon>
        <taxon>Mugilidae</taxon>
        <taxon>Mugil</taxon>
    </lineage>
</organism>
<dbReference type="EMBL" id="Y18668">
    <property type="protein sequence ID" value="CAA77250.1"/>
    <property type="molecule type" value="mRNA"/>
</dbReference>
<dbReference type="SMR" id="Q9YGZ9"/>
<dbReference type="GlyCosmos" id="Q9YGZ9">
    <property type="glycosylation" value="3 sites, No reported glycans"/>
</dbReference>
<dbReference type="GO" id="GO:0016020">
    <property type="term" value="C:membrane"/>
    <property type="evidence" value="ECO:0000250"/>
    <property type="project" value="UniProtKB"/>
</dbReference>
<dbReference type="GO" id="GO:0097381">
    <property type="term" value="C:photoreceptor disc membrane"/>
    <property type="evidence" value="ECO:0000250"/>
    <property type="project" value="UniProtKB"/>
</dbReference>
<dbReference type="GO" id="GO:0005886">
    <property type="term" value="C:plasma membrane"/>
    <property type="evidence" value="ECO:0000250"/>
    <property type="project" value="UniProtKB"/>
</dbReference>
<dbReference type="GO" id="GO:0005502">
    <property type="term" value="F:11-cis retinal binding"/>
    <property type="evidence" value="ECO:0000250"/>
    <property type="project" value="UniProtKB"/>
</dbReference>
<dbReference type="GO" id="GO:0008020">
    <property type="term" value="F:G protein-coupled photoreceptor activity"/>
    <property type="evidence" value="ECO:0000250"/>
    <property type="project" value="UniProtKB"/>
</dbReference>
<dbReference type="GO" id="GO:0016038">
    <property type="term" value="P:absorption of visible light"/>
    <property type="evidence" value="ECO:0000250"/>
    <property type="project" value="UniProtKB"/>
</dbReference>
<dbReference type="GO" id="GO:0016056">
    <property type="term" value="P:G protein-coupled opsin signaling pathway"/>
    <property type="evidence" value="ECO:0000250"/>
    <property type="project" value="UniProtKB"/>
</dbReference>
<dbReference type="GO" id="GO:0007601">
    <property type="term" value="P:visual perception"/>
    <property type="evidence" value="ECO:0007669"/>
    <property type="project" value="UniProtKB-KW"/>
</dbReference>
<dbReference type="CDD" id="cd15080">
    <property type="entry name" value="7tmA_MWS_opsin"/>
    <property type="match status" value="1"/>
</dbReference>
<dbReference type="FunFam" id="1.20.1070.10:FF:000018">
    <property type="entry name" value="Rhodopsin"/>
    <property type="match status" value="1"/>
</dbReference>
<dbReference type="Gene3D" id="1.20.1070.10">
    <property type="entry name" value="Rhodopsin 7-helix transmembrane proteins"/>
    <property type="match status" value="1"/>
</dbReference>
<dbReference type="InterPro" id="IPR050125">
    <property type="entry name" value="GPCR_opsins"/>
</dbReference>
<dbReference type="InterPro" id="IPR000276">
    <property type="entry name" value="GPCR_Rhodpsn"/>
</dbReference>
<dbReference type="InterPro" id="IPR017452">
    <property type="entry name" value="GPCR_Rhodpsn_7TM"/>
</dbReference>
<dbReference type="InterPro" id="IPR001760">
    <property type="entry name" value="Opsin"/>
</dbReference>
<dbReference type="InterPro" id="IPR027430">
    <property type="entry name" value="Retinal_BS"/>
</dbReference>
<dbReference type="InterPro" id="IPR000732">
    <property type="entry name" value="Rhodopsin"/>
</dbReference>
<dbReference type="InterPro" id="IPR019477">
    <property type="entry name" value="Rhodopsin_N"/>
</dbReference>
<dbReference type="PANTHER" id="PTHR24240">
    <property type="entry name" value="OPSIN"/>
    <property type="match status" value="1"/>
</dbReference>
<dbReference type="Pfam" id="PF00001">
    <property type="entry name" value="7tm_1"/>
    <property type="match status" value="1"/>
</dbReference>
<dbReference type="Pfam" id="PF10413">
    <property type="entry name" value="Rhodopsin_N"/>
    <property type="match status" value="1"/>
</dbReference>
<dbReference type="PRINTS" id="PR00237">
    <property type="entry name" value="GPCRRHODOPSN"/>
</dbReference>
<dbReference type="PRINTS" id="PR00238">
    <property type="entry name" value="OPSIN"/>
</dbReference>
<dbReference type="PRINTS" id="PR00579">
    <property type="entry name" value="RHODOPSIN"/>
</dbReference>
<dbReference type="SUPFAM" id="SSF81321">
    <property type="entry name" value="Family A G protein-coupled receptor-like"/>
    <property type="match status" value="1"/>
</dbReference>
<dbReference type="PROSITE" id="PS00237">
    <property type="entry name" value="G_PROTEIN_RECEP_F1_1"/>
    <property type="match status" value="1"/>
</dbReference>
<dbReference type="PROSITE" id="PS50262">
    <property type="entry name" value="G_PROTEIN_RECEP_F1_2"/>
    <property type="match status" value="1"/>
</dbReference>
<dbReference type="PROSITE" id="PS00238">
    <property type="entry name" value="OPSIN"/>
    <property type="match status" value="1"/>
</dbReference>
<protein>
    <recommendedName>
        <fullName>Rhodopsin</fullName>
    </recommendedName>
</protein>
<reference key="1">
    <citation type="submission" date="1999-01" db="EMBL/GenBank/DDBJ databases">
        <title>Comparative analysis of opsins in Mediterranian coastal fish.</title>
        <authorList>
            <person name="Archer S.N."/>
            <person name="Hirano J."/>
        </authorList>
    </citation>
    <scope>NUCLEOTIDE SEQUENCE [MRNA]</scope>
    <source>
        <tissue>Retina</tissue>
    </source>
</reference>
<reference key="2">
    <citation type="journal article" date="2008" name="Photochem. Photobiol.">
        <title>Presence of rhodopsin and porphyropsin in the eyes of 164 fishes, representing marine, diadromous, coastal and freshwater species--a qualitative and comparative study.</title>
        <authorList>
            <person name="Toyama M."/>
            <person name="Hironaka M."/>
            <person name="Yamahama Y."/>
            <person name="Horiguchi H."/>
            <person name="Tsukada O."/>
            <person name="Uto N."/>
            <person name="Ueno Y."/>
            <person name="Tokunaga F."/>
            <person name="Seno K."/>
            <person name="Hariyama T."/>
        </authorList>
    </citation>
    <scope>RETINAL-BINDING</scope>
    <scope>FUNCTION</scope>
</reference>
<comment type="function">
    <text evidence="1 2 3 8">Photoreceptor required for image-forming vision at low light intensity. While most salt water fish species use retinal as chromophore, most freshwater fish use 3-dehydroretinal, or a mixture of retinal and 3-dehydroretinal (PubMed:18422881). Light-induced isomerization of 11-cis to all-trans retinal triggers a conformational change that activates signaling via G-proteins. Subsequent receptor phosphorylation mediates displacement of the bound G-protein alpha subunit by arrestin and terminates signaling (By similarity).</text>
</comment>
<comment type="subcellular location">
    <subcellularLocation>
        <location evidence="2">Membrane</location>
        <topology evidence="2">Multi-pass membrane protein</topology>
    </subcellularLocation>
    <subcellularLocation>
        <location evidence="4">Cell projection</location>
        <location evidence="4">Cilium</location>
        <location evidence="4">Photoreceptor outer segment</location>
    </subcellularLocation>
    <text evidence="2">Synthesized in the inner segment (IS) of rod photoreceptor cells before vectorial transport to disk membranes in the rod outer segment (OS) photosensory cilia.</text>
</comment>
<comment type="PTM">
    <text evidence="1">Phosphorylated on some or all of the serine and threonine residues present in the C-terminal region.</text>
</comment>
<comment type="PTM">
    <text evidence="1">Contains one covalently linked retinal chromophore.</text>
</comment>
<comment type="similarity">
    <text evidence="6">Belongs to the G-protein coupled receptor 1 family. Opsin subfamily.</text>
</comment>
<sequence length="353" mass="39581">MNGTEGPYFYIPMVNTTGIVRSPYEYPQYYLVNPAAYAALGAYMFLLILLGFPINFLTLYVTIEHKKLRTPLNYILLNLAVANLFMVFGGFTTTMYTSMHGYFVLGRLGCNLEGFFATLGGEIALWSLVVLAVERWMVVCKPISNFRFGENHAIMGLAFTWVMASACAVPPLVGWSRYIPEGMQCSCGIDYYTRAEGFNNESFVIYMFVCHFLIPLVVVFFCYGRLLCAVKEAAAAQQESETTQRAEREVSRMVVIMVVAFLICWCPYAGVAWYIFTHQGSEFGPLFMTFPAFFAKSSSIYNPMIYICMNKQFRHCMITTLCCGKNPFEEEEGASTTSKTEASSVSSSSVSPA</sequence>
<name>OPSD_MUGCE</name>
<proteinExistence type="evidence at protein level"/>
<accession>Q9YGZ9</accession>
<keyword id="KW-0966">Cell projection</keyword>
<keyword id="KW-0157">Chromophore</keyword>
<keyword id="KW-1015">Disulfide bond</keyword>
<keyword id="KW-0297">G-protein coupled receptor</keyword>
<keyword id="KW-0325">Glycoprotein</keyword>
<keyword id="KW-0449">Lipoprotein</keyword>
<keyword id="KW-0472">Membrane</keyword>
<keyword id="KW-0564">Palmitate</keyword>
<keyword id="KW-0597">Phosphoprotein</keyword>
<keyword id="KW-0600">Photoreceptor protein</keyword>
<keyword id="KW-0675">Receptor</keyword>
<keyword id="KW-0681">Retinal protein</keyword>
<keyword id="KW-0716">Sensory transduction</keyword>
<keyword id="KW-0807">Transducer</keyword>
<keyword id="KW-0812">Transmembrane</keyword>
<keyword id="KW-1133">Transmembrane helix</keyword>
<keyword id="KW-0844">Vision</keyword>
<gene>
    <name type="primary">rho</name>
</gene>
<evidence type="ECO:0000250" key="1">
    <source>
        <dbReference type="UniProtKB" id="P02699"/>
    </source>
</evidence>
<evidence type="ECO:0000250" key="2">
    <source>
        <dbReference type="UniProtKB" id="P08100"/>
    </source>
</evidence>
<evidence type="ECO:0000250" key="3">
    <source>
        <dbReference type="UniProtKB" id="P32309"/>
    </source>
</evidence>
<evidence type="ECO:0000250" key="4">
    <source>
        <dbReference type="UniProtKB" id="P35359"/>
    </source>
</evidence>
<evidence type="ECO:0000255" key="5"/>
<evidence type="ECO:0000255" key="6">
    <source>
        <dbReference type="PROSITE-ProRule" id="PRU00521"/>
    </source>
</evidence>
<evidence type="ECO:0000256" key="7">
    <source>
        <dbReference type="SAM" id="MobiDB-lite"/>
    </source>
</evidence>
<evidence type="ECO:0000269" key="8">
    <source>
    </source>
</evidence>
<evidence type="ECO:0000305" key="9"/>
<feature type="chain" id="PRO_0000197688" description="Rhodopsin">
    <location>
        <begin position="1"/>
        <end position="353"/>
    </location>
</feature>
<feature type="topological domain" description="Extracellular" evidence="9">
    <location>
        <begin position="1"/>
        <end position="36"/>
    </location>
</feature>
<feature type="transmembrane region" description="Helical; Name=1" evidence="1">
    <location>
        <begin position="37"/>
        <end position="61"/>
    </location>
</feature>
<feature type="topological domain" description="Cytoplasmic" evidence="9">
    <location>
        <begin position="62"/>
        <end position="73"/>
    </location>
</feature>
<feature type="transmembrane region" description="Helical; Name=2" evidence="1">
    <location>
        <begin position="74"/>
        <end position="96"/>
    </location>
</feature>
<feature type="topological domain" description="Extracellular" evidence="9">
    <location>
        <begin position="97"/>
        <end position="110"/>
    </location>
</feature>
<feature type="transmembrane region" description="Helical; Name=3" evidence="1">
    <location>
        <begin position="111"/>
        <end position="133"/>
    </location>
</feature>
<feature type="topological domain" description="Cytoplasmic" evidence="9">
    <location>
        <begin position="134"/>
        <end position="152"/>
    </location>
</feature>
<feature type="transmembrane region" description="Helical; Name=4" evidence="1">
    <location>
        <begin position="153"/>
        <end position="173"/>
    </location>
</feature>
<feature type="topological domain" description="Extracellular" evidence="9">
    <location>
        <begin position="174"/>
        <end position="202"/>
    </location>
</feature>
<feature type="transmembrane region" description="Helical; Name=5" evidence="1">
    <location>
        <begin position="203"/>
        <end position="224"/>
    </location>
</feature>
<feature type="topological domain" description="Cytoplasmic" evidence="9">
    <location>
        <begin position="225"/>
        <end position="252"/>
    </location>
</feature>
<feature type="transmembrane region" description="Helical; Name=6" evidence="1">
    <location>
        <begin position="253"/>
        <end position="274"/>
    </location>
</feature>
<feature type="topological domain" description="Extracellular" evidence="9">
    <location>
        <begin position="275"/>
        <end position="286"/>
    </location>
</feature>
<feature type="transmembrane region" description="Helical; Name=7" evidence="1">
    <location>
        <begin position="287"/>
        <end position="308"/>
    </location>
</feature>
<feature type="topological domain" description="Cytoplasmic" evidence="9">
    <location>
        <begin position="309"/>
        <end position="353"/>
    </location>
</feature>
<feature type="region of interest" description="Disordered" evidence="7">
    <location>
        <begin position="330"/>
        <end position="353"/>
    </location>
</feature>
<feature type="short sequence motif" description="'Ionic lock' involved in activated form stabilization" evidence="1">
    <location>
        <begin position="134"/>
        <end position="136"/>
    </location>
</feature>
<feature type="compositionally biased region" description="Low complexity" evidence="7">
    <location>
        <begin position="334"/>
        <end position="353"/>
    </location>
</feature>
<feature type="site" description="Plays an important role in the conformation switch to the active conformation" evidence="1">
    <location>
        <position position="113"/>
    </location>
</feature>
<feature type="modified residue" description="N6-(retinylidene)lysine" evidence="1">
    <location>
        <position position="296"/>
    </location>
</feature>
<feature type="lipid moiety-binding region" description="S-palmitoyl cysteine" evidence="1">
    <location>
        <position position="322"/>
    </location>
</feature>
<feature type="lipid moiety-binding region" description="S-palmitoyl cysteine" evidence="1">
    <location>
        <position position="323"/>
    </location>
</feature>
<feature type="glycosylation site" description="N-linked (GlcNAc...) asparagine" evidence="5">
    <location>
        <position position="2"/>
    </location>
</feature>
<feature type="glycosylation site" description="N-linked (GlcNAc...) asparagine" evidence="5">
    <location>
        <position position="15"/>
    </location>
</feature>
<feature type="glycosylation site" description="N-linked (GlcNAc...) asparagine" evidence="5">
    <location>
        <position position="200"/>
    </location>
</feature>
<feature type="disulfide bond" evidence="6">
    <location>
        <begin position="110"/>
        <end position="187"/>
    </location>
</feature>